<evidence type="ECO:0000255" key="1">
    <source>
        <dbReference type="HAMAP-Rule" id="MF_00139"/>
    </source>
</evidence>
<evidence type="ECO:0000255" key="2">
    <source>
        <dbReference type="PROSITE-ProRule" id="PRU01202"/>
    </source>
</evidence>
<proteinExistence type="inferred from homology"/>
<protein>
    <recommendedName>
        <fullName evidence="1">Bifunctional purine biosynthesis protein PurH</fullName>
    </recommendedName>
    <domain>
        <recommendedName>
            <fullName evidence="1">Phosphoribosylaminoimidazolecarboxamide formyltransferase</fullName>
            <ecNumber evidence="1">2.1.2.3</ecNumber>
        </recommendedName>
        <alternativeName>
            <fullName evidence="1">AICAR transformylase</fullName>
        </alternativeName>
    </domain>
    <domain>
        <recommendedName>
            <fullName evidence="1">IMP cyclohydrolase</fullName>
            <ecNumber evidence="1">3.5.4.10</ecNumber>
        </recommendedName>
        <alternativeName>
            <fullName evidence="1">ATIC</fullName>
        </alternativeName>
        <alternativeName>
            <fullName evidence="1">IMP synthase</fullName>
        </alternativeName>
        <alternativeName>
            <fullName evidence="1">Inosinicase</fullName>
        </alternativeName>
    </domain>
</protein>
<organism>
    <name type="scientific">Anaeromyxobacter sp. (strain Fw109-5)</name>
    <dbReference type="NCBI Taxonomy" id="404589"/>
    <lineage>
        <taxon>Bacteria</taxon>
        <taxon>Pseudomonadati</taxon>
        <taxon>Myxococcota</taxon>
        <taxon>Myxococcia</taxon>
        <taxon>Myxococcales</taxon>
        <taxon>Cystobacterineae</taxon>
        <taxon>Anaeromyxobacteraceae</taxon>
        <taxon>Anaeromyxobacter</taxon>
    </lineage>
</organism>
<keyword id="KW-0378">Hydrolase</keyword>
<keyword id="KW-0511">Multifunctional enzyme</keyword>
<keyword id="KW-0658">Purine biosynthesis</keyword>
<keyword id="KW-1185">Reference proteome</keyword>
<keyword id="KW-0808">Transferase</keyword>
<name>PUR9_ANADF</name>
<gene>
    <name evidence="1" type="primary">purH</name>
    <name type="ordered locus">Anae109_1399</name>
</gene>
<sequence>MVRRALVSVSDKTGLVPFAKRLAALGVEILSTGGTQRALADAGVPVVSVGDYTQAPEILAGRVKTLHPRVHGGILYRRGLASDEADVKARDIPPIDLVVVNLYPFREAVAAGKPFWDCVEEIDIGGPTMVRSAAKNAAHVGVVVDPADYERVAAELEASRALSDQTRFELMKKAFAHTAAYDAAISEFLTARESTDAQAKRFPATLAAVYSKAGDLRYGENPHQAGAFYRAGREPDEPTVAFAKVLQGKELSYNNLLDLEAALAAVKEHDEVACVVIKHNTPCGVSLGKTPAEAFARARACDPVSAFGGIVALNRPVDAAAAKELTDLFLECVIAPGYDEAARAALGAKKNLRLLEAPRLAEPRTSWTRRPEELRELRSIPGGLLVMDRDLGAIRRDDCKVMTKRAPTDAEWEDLLFAWKVVKHVKSNAIVFAKEKRTVGIGGGQTSRVESVKTAVMKAQLELVGSTVGSDAFFPFKDGVEEIIKAGATAIIQPGGSVRDPEVIEAADAANVAMVATGMRHFRH</sequence>
<reference key="1">
    <citation type="journal article" date="2015" name="Genome Announc.">
        <title>Complete genome sequence of Anaeromyxobacter sp. Fw109-5, an anaerobic, metal-reducing bacterium isolated from a contaminated subsurface environment.</title>
        <authorList>
            <person name="Hwang C."/>
            <person name="Copeland A."/>
            <person name="Lucas S."/>
            <person name="Lapidus A."/>
            <person name="Barry K."/>
            <person name="Glavina Del Rio T."/>
            <person name="Dalin E."/>
            <person name="Tice H."/>
            <person name="Pitluck S."/>
            <person name="Sims D."/>
            <person name="Brettin T."/>
            <person name="Bruce D.C."/>
            <person name="Detter J.C."/>
            <person name="Han C.S."/>
            <person name="Schmutz J."/>
            <person name="Larimer F.W."/>
            <person name="Land M.L."/>
            <person name="Hauser L.J."/>
            <person name="Kyrpides N."/>
            <person name="Lykidis A."/>
            <person name="Richardson P."/>
            <person name="Belieav A."/>
            <person name="Sanford R.A."/>
            <person name="Loeffler F.E."/>
            <person name="Fields M.W."/>
        </authorList>
    </citation>
    <scope>NUCLEOTIDE SEQUENCE [LARGE SCALE GENOMIC DNA]</scope>
    <source>
        <strain>Fw109-5</strain>
    </source>
</reference>
<feature type="chain" id="PRO_1000018835" description="Bifunctional purine biosynthesis protein PurH">
    <location>
        <begin position="1"/>
        <end position="524"/>
    </location>
</feature>
<feature type="domain" description="MGS-like" evidence="2">
    <location>
        <begin position="1"/>
        <end position="144"/>
    </location>
</feature>
<accession>A7HA60</accession>
<dbReference type="EC" id="2.1.2.3" evidence="1"/>
<dbReference type="EC" id="3.5.4.10" evidence="1"/>
<dbReference type="EMBL" id="CP000769">
    <property type="protein sequence ID" value="ABS25606.1"/>
    <property type="molecule type" value="Genomic_DNA"/>
</dbReference>
<dbReference type="RefSeq" id="WP_011985712.1">
    <property type="nucleotide sequence ID" value="NC_009675.1"/>
</dbReference>
<dbReference type="SMR" id="A7HA60"/>
<dbReference type="STRING" id="404589.Anae109_1399"/>
<dbReference type="KEGG" id="afw:Anae109_1399"/>
<dbReference type="eggNOG" id="COG0138">
    <property type="taxonomic scope" value="Bacteria"/>
</dbReference>
<dbReference type="HOGENOM" id="CLU_016316_5_2_7"/>
<dbReference type="OrthoDB" id="9802065at2"/>
<dbReference type="UniPathway" id="UPA00074">
    <property type="reaction ID" value="UER00133"/>
</dbReference>
<dbReference type="UniPathway" id="UPA00074">
    <property type="reaction ID" value="UER00135"/>
</dbReference>
<dbReference type="Proteomes" id="UP000006382">
    <property type="component" value="Chromosome"/>
</dbReference>
<dbReference type="GO" id="GO:0005829">
    <property type="term" value="C:cytosol"/>
    <property type="evidence" value="ECO:0007669"/>
    <property type="project" value="TreeGrafter"/>
</dbReference>
<dbReference type="GO" id="GO:0003937">
    <property type="term" value="F:IMP cyclohydrolase activity"/>
    <property type="evidence" value="ECO:0007669"/>
    <property type="project" value="UniProtKB-UniRule"/>
</dbReference>
<dbReference type="GO" id="GO:0004643">
    <property type="term" value="F:phosphoribosylaminoimidazolecarboxamide formyltransferase activity"/>
    <property type="evidence" value="ECO:0007669"/>
    <property type="project" value="UniProtKB-UniRule"/>
</dbReference>
<dbReference type="GO" id="GO:0006189">
    <property type="term" value="P:'de novo' IMP biosynthetic process"/>
    <property type="evidence" value="ECO:0007669"/>
    <property type="project" value="UniProtKB-UniRule"/>
</dbReference>
<dbReference type="CDD" id="cd01421">
    <property type="entry name" value="IMPCH"/>
    <property type="match status" value="1"/>
</dbReference>
<dbReference type="FunFam" id="3.40.140.20:FF:000001">
    <property type="entry name" value="Bifunctional purine biosynthesis protein PurH"/>
    <property type="match status" value="1"/>
</dbReference>
<dbReference type="FunFam" id="3.40.50.1380:FF:000001">
    <property type="entry name" value="Bifunctional purine biosynthesis protein PurH"/>
    <property type="match status" value="1"/>
</dbReference>
<dbReference type="Gene3D" id="3.40.140.20">
    <property type="match status" value="2"/>
</dbReference>
<dbReference type="Gene3D" id="3.40.50.1380">
    <property type="entry name" value="Methylglyoxal synthase-like domain"/>
    <property type="match status" value="1"/>
</dbReference>
<dbReference type="HAMAP" id="MF_00139">
    <property type="entry name" value="PurH"/>
    <property type="match status" value="1"/>
</dbReference>
<dbReference type="InterPro" id="IPR024051">
    <property type="entry name" value="AICAR_Tfase_dup_dom_sf"/>
</dbReference>
<dbReference type="InterPro" id="IPR016193">
    <property type="entry name" value="Cytidine_deaminase-like"/>
</dbReference>
<dbReference type="InterPro" id="IPR011607">
    <property type="entry name" value="MGS-like_dom"/>
</dbReference>
<dbReference type="InterPro" id="IPR036914">
    <property type="entry name" value="MGS-like_dom_sf"/>
</dbReference>
<dbReference type="InterPro" id="IPR002695">
    <property type="entry name" value="PurH-like"/>
</dbReference>
<dbReference type="NCBIfam" id="NF002049">
    <property type="entry name" value="PRK00881.1"/>
    <property type="match status" value="1"/>
</dbReference>
<dbReference type="NCBIfam" id="TIGR00355">
    <property type="entry name" value="purH"/>
    <property type="match status" value="1"/>
</dbReference>
<dbReference type="PANTHER" id="PTHR11692:SF0">
    <property type="entry name" value="BIFUNCTIONAL PURINE BIOSYNTHESIS PROTEIN ATIC"/>
    <property type="match status" value="1"/>
</dbReference>
<dbReference type="PANTHER" id="PTHR11692">
    <property type="entry name" value="BIFUNCTIONAL PURINE BIOSYNTHESIS PROTEIN PURH"/>
    <property type="match status" value="1"/>
</dbReference>
<dbReference type="Pfam" id="PF01808">
    <property type="entry name" value="AICARFT_IMPCHas"/>
    <property type="match status" value="1"/>
</dbReference>
<dbReference type="Pfam" id="PF02142">
    <property type="entry name" value="MGS"/>
    <property type="match status" value="1"/>
</dbReference>
<dbReference type="PIRSF" id="PIRSF000414">
    <property type="entry name" value="AICARFT_IMPCHas"/>
    <property type="match status" value="1"/>
</dbReference>
<dbReference type="SMART" id="SM00798">
    <property type="entry name" value="AICARFT_IMPCHas"/>
    <property type="match status" value="1"/>
</dbReference>
<dbReference type="SMART" id="SM00851">
    <property type="entry name" value="MGS"/>
    <property type="match status" value="1"/>
</dbReference>
<dbReference type="SUPFAM" id="SSF53927">
    <property type="entry name" value="Cytidine deaminase-like"/>
    <property type="match status" value="1"/>
</dbReference>
<dbReference type="SUPFAM" id="SSF52335">
    <property type="entry name" value="Methylglyoxal synthase-like"/>
    <property type="match status" value="1"/>
</dbReference>
<dbReference type="PROSITE" id="PS51855">
    <property type="entry name" value="MGS"/>
    <property type="match status" value="1"/>
</dbReference>
<comment type="catalytic activity">
    <reaction evidence="1">
        <text>(6R)-10-formyltetrahydrofolate + 5-amino-1-(5-phospho-beta-D-ribosyl)imidazole-4-carboxamide = 5-formamido-1-(5-phospho-D-ribosyl)imidazole-4-carboxamide + (6S)-5,6,7,8-tetrahydrofolate</text>
        <dbReference type="Rhea" id="RHEA:22192"/>
        <dbReference type="ChEBI" id="CHEBI:57453"/>
        <dbReference type="ChEBI" id="CHEBI:58467"/>
        <dbReference type="ChEBI" id="CHEBI:58475"/>
        <dbReference type="ChEBI" id="CHEBI:195366"/>
        <dbReference type="EC" id="2.1.2.3"/>
    </reaction>
</comment>
<comment type="catalytic activity">
    <reaction evidence="1">
        <text>IMP + H2O = 5-formamido-1-(5-phospho-D-ribosyl)imidazole-4-carboxamide</text>
        <dbReference type="Rhea" id="RHEA:18445"/>
        <dbReference type="ChEBI" id="CHEBI:15377"/>
        <dbReference type="ChEBI" id="CHEBI:58053"/>
        <dbReference type="ChEBI" id="CHEBI:58467"/>
        <dbReference type="EC" id="3.5.4.10"/>
    </reaction>
</comment>
<comment type="pathway">
    <text evidence="1">Purine metabolism; IMP biosynthesis via de novo pathway; 5-formamido-1-(5-phospho-D-ribosyl)imidazole-4-carboxamide from 5-amino-1-(5-phospho-D-ribosyl)imidazole-4-carboxamide (10-formyl THF route): step 1/1.</text>
</comment>
<comment type="pathway">
    <text evidence="1">Purine metabolism; IMP biosynthesis via de novo pathway; IMP from 5-formamido-1-(5-phospho-D-ribosyl)imidazole-4-carboxamide: step 1/1.</text>
</comment>
<comment type="domain">
    <text evidence="1">The IMP cyclohydrolase activity resides in the N-terminal region.</text>
</comment>
<comment type="similarity">
    <text evidence="1">Belongs to the PurH family.</text>
</comment>